<reference key="1">
    <citation type="journal article" date="2010" name="Appl. Environ. Microbiol.">
        <title>The genome sequence of Psychrobacter arcticus 273-4, a psychroactive Siberian permafrost bacterium, reveals mechanisms for adaptation to low-temperature growth.</title>
        <authorList>
            <person name="Ayala-del-Rio H.L."/>
            <person name="Chain P.S."/>
            <person name="Grzymski J.J."/>
            <person name="Ponder M.A."/>
            <person name="Ivanova N."/>
            <person name="Bergholz P.W."/>
            <person name="Di Bartolo G."/>
            <person name="Hauser L."/>
            <person name="Land M."/>
            <person name="Bakermans C."/>
            <person name="Rodrigues D."/>
            <person name="Klappenbach J."/>
            <person name="Zarka D."/>
            <person name="Larimer F."/>
            <person name="Richardson P."/>
            <person name="Murray A."/>
            <person name="Thomashow M."/>
            <person name="Tiedje J.M."/>
        </authorList>
    </citation>
    <scope>NUCLEOTIDE SEQUENCE [LARGE SCALE GENOMIC DNA]</scope>
    <source>
        <strain>DSM 17307 / VKM B-2377 / 273-4</strain>
    </source>
</reference>
<dbReference type="EC" id="1.8.4.11" evidence="1"/>
<dbReference type="EMBL" id="CP000082">
    <property type="protein sequence ID" value="AAZ19798.1"/>
    <property type="molecule type" value="Genomic_DNA"/>
</dbReference>
<dbReference type="RefSeq" id="WP_011281207.1">
    <property type="nucleotide sequence ID" value="NC_007204.1"/>
</dbReference>
<dbReference type="SMR" id="Q4FQB0"/>
<dbReference type="STRING" id="259536.Psyc_1950"/>
<dbReference type="KEGG" id="par:Psyc_1950"/>
<dbReference type="eggNOG" id="COG0225">
    <property type="taxonomic scope" value="Bacteria"/>
</dbReference>
<dbReference type="HOGENOM" id="CLU_031040_10_0_6"/>
<dbReference type="OrthoDB" id="4174719at2"/>
<dbReference type="Proteomes" id="UP000000546">
    <property type="component" value="Chromosome"/>
</dbReference>
<dbReference type="GO" id="GO:0033744">
    <property type="term" value="F:L-methionine:thioredoxin-disulfide S-oxidoreductase activity"/>
    <property type="evidence" value="ECO:0007669"/>
    <property type="project" value="RHEA"/>
</dbReference>
<dbReference type="GO" id="GO:0008113">
    <property type="term" value="F:peptide-methionine (S)-S-oxide reductase activity"/>
    <property type="evidence" value="ECO:0007669"/>
    <property type="project" value="UniProtKB-UniRule"/>
</dbReference>
<dbReference type="GO" id="GO:0036211">
    <property type="term" value="P:protein modification process"/>
    <property type="evidence" value="ECO:0007669"/>
    <property type="project" value="UniProtKB-UniRule"/>
</dbReference>
<dbReference type="Gene3D" id="3.30.1060.10">
    <property type="entry name" value="Peptide methionine sulphoxide reductase MsrA"/>
    <property type="match status" value="1"/>
</dbReference>
<dbReference type="HAMAP" id="MF_01401">
    <property type="entry name" value="MsrA"/>
    <property type="match status" value="1"/>
</dbReference>
<dbReference type="InterPro" id="IPR002569">
    <property type="entry name" value="Met_Sox_Rdtase_MsrA_dom"/>
</dbReference>
<dbReference type="InterPro" id="IPR036509">
    <property type="entry name" value="Met_Sox_Rdtase_MsrA_sf"/>
</dbReference>
<dbReference type="NCBIfam" id="TIGR00401">
    <property type="entry name" value="msrA"/>
    <property type="match status" value="1"/>
</dbReference>
<dbReference type="PANTHER" id="PTHR43774">
    <property type="entry name" value="PEPTIDE METHIONINE SULFOXIDE REDUCTASE"/>
    <property type="match status" value="1"/>
</dbReference>
<dbReference type="PANTHER" id="PTHR43774:SF1">
    <property type="entry name" value="PEPTIDE METHIONINE SULFOXIDE REDUCTASE MSRA 2"/>
    <property type="match status" value="1"/>
</dbReference>
<dbReference type="Pfam" id="PF01625">
    <property type="entry name" value="PMSR"/>
    <property type="match status" value="1"/>
</dbReference>
<dbReference type="SUPFAM" id="SSF55068">
    <property type="entry name" value="Peptide methionine sulfoxide reductase"/>
    <property type="match status" value="1"/>
</dbReference>
<sequence length="173" mass="19293">MQTIILGGGCFWCTESVFLSVKGVESVISGYMGGNAVSANYEAVCGGDTGHIEVIKVKFNESTVPLEVILDVFFATHDPTTMDRQANDVGSQYRSVVFYTDETQKPTVDRTINKLRDMGINIVTEVHPAVEFYQAEDTHQDFFNRNPGQAYCNFAIPPKLAKLRKEFSQYMVS</sequence>
<protein>
    <recommendedName>
        <fullName evidence="1">Peptide methionine sulfoxide reductase MsrA</fullName>
        <shortName evidence="1">Protein-methionine-S-oxide reductase</shortName>
        <ecNumber evidence="1">1.8.4.11</ecNumber>
    </recommendedName>
    <alternativeName>
        <fullName evidence="1">Peptide-methionine (S)-S-oxide reductase</fullName>
        <shortName evidence="1">Peptide Met(O) reductase</shortName>
    </alternativeName>
</protein>
<keyword id="KW-0560">Oxidoreductase</keyword>
<keyword id="KW-1185">Reference proteome</keyword>
<proteinExistence type="inferred from homology"/>
<comment type="function">
    <text evidence="1">Has an important function as a repair enzyme for proteins that have been inactivated by oxidation. Catalyzes the reversible oxidation-reduction of methionine sulfoxide in proteins to methionine.</text>
</comment>
<comment type="catalytic activity">
    <reaction evidence="1">
        <text>L-methionyl-[protein] + [thioredoxin]-disulfide + H2O = L-methionyl-(S)-S-oxide-[protein] + [thioredoxin]-dithiol</text>
        <dbReference type="Rhea" id="RHEA:14217"/>
        <dbReference type="Rhea" id="RHEA-COMP:10698"/>
        <dbReference type="Rhea" id="RHEA-COMP:10700"/>
        <dbReference type="Rhea" id="RHEA-COMP:12313"/>
        <dbReference type="Rhea" id="RHEA-COMP:12315"/>
        <dbReference type="ChEBI" id="CHEBI:15377"/>
        <dbReference type="ChEBI" id="CHEBI:16044"/>
        <dbReference type="ChEBI" id="CHEBI:29950"/>
        <dbReference type="ChEBI" id="CHEBI:44120"/>
        <dbReference type="ChEBI" id="CHEBI:50058"/>
        <dbReference type="EC" id="1.8.4.11"/>
    </reaction>
</comment>
<comment type="catalytic activity">
    <reaction evidence="1">
        <text>[thioredoxin]-disulfide + L-methionine + H2O = L-methionine (S)-S-oxide + [thioredoxin]-dithiol</text>
        <dbReference type="Rhea" id="RHEA:19993"/>
        <dbReference type="Rhea" id="RHEA-COMP:10698"/>
        <dbReference type="Rhea" id="RHEA-COMP:10700"/>
        <dbReference type="ChEBI" id="CHEBI:15377"/>
        <dbReference type="ChEBI" id="CHEBI:29950"/>
        <dbReference type="ChEBI" id="CHEBI:50058"/>
        <dbReference type="ChEBI" id="CHEBI:57844"/>
        <dbReference type="ChEBI" id="CHEBI:58772"/>
        <dbReference type="EC" id="1.8.4.11"/>
    </reaction>
</comment>
<comment type="similarity">
    <text evidence="1">Belongs to the MsrA Met sulfoxide reductase family.</text>
</comment>
<gene>
    <name evidence="1" type="primary">msrA</name>
    <name type="ordered locus">Psyc_1950</name>
</gene>
<feature type="chain" id="PRO_1000068354" description="Peptide methionine sulfoxide reductase MsrA">
    <location>
        <begin position="1"/>
        <end position="173"/>
    </location>
</feature>
<feature type="active site" evidence="1">
    <location>
        <position position="10"/>
    </location>
</feature>
<evidence type="ECO:0000255" key="1">
    <source>
        <dbReference type="HAMAP-Rule" id="MF_01401"/>
    </source>
</evidence>
<name>MSRA_PSYA2</name>
<accession>Q4FQB0</accession>
<organism>
    <name type="scientific">Psychrobacter arcticus (strain DSM 17307 / VKM B-2377 / 273-4)</name>
    <dbReference type="NCBI Taxonomy" id="259536"/>
    <lineage>
        <taxon>Bacteria</taxon>
        <taxon>Pseudomonadati</taxon>
        <taxon>Pseudomonadota</taxon>
        <taxon>Gammaproteobacteria</taxon>
        <taxon>Moraxellales</taxon>
        <taxon>Moraxellaceae</taxon>
        <taxon>Psychrobacter</taxon>
    </lineage>
</organism>